<accession>P85574</accession>
<reference evidence="5" key="1">
    <citation type="journal article" date="2009" name="BMC Evol. Biol.">
        <title>A proteomic approach for studying insect phylogeny: CAPA peptides of ancient insect taxa (Dictyoptera, Blattoptera) as a test case.</title>
        <authorList>
            <person name="Roth S."/>
            <person name="Fromm B."/>
            <person name="Gaede G."/>
            <person name="Predel R."/>
        </authorList>
    </citation>
    <scope>PROTEIN SEQUENCE</scope>
    <scope>AMIDATION AT LEU-17</scope>
    <source>
        <tissue evidence="3">Abdominal perisympathetic organs</tissue>
    </source>
</reference>
<comment type="function">
    <text evidence="1">Myoactive.</text>
</comment>
<comment type="subcellular location">
    <subcellularLocation>
        <location evidence="5">Secreted</location>
    </subcellularLocation>
</comment>
<comment type="similarity">
    <text evidence="2">Belongs to the pyrokinin family.</text>
</comment>
<sequence length="17" mass="1755">EGSGSGETSGMWFGPRL</sequence>
<name>PPK5_CRYKY</name>
<keyword id="KW-0027">Amidation</keyword>
<keyword id="KW-0903">Direct protein sequencing</keyword>
<keyword id="KW-0527">Neuropeptide</keyword>
<keyword id="KW-0964">Secreted</keyword>
<proteinExistence type="evidence at protein level"/>
<organism>
    <name type="scientific">Cryptocercus kyebangensis</name>
    <name type="common">Brown-hooded cockroach</name>
    <dbReference type="NCBI Taxonomy" id="161578"/>
    <lineage>
        <taxon>Eukaryota</taxon>
        <taxon>Metazoa</taxon>
        <taxon>Ecdysozoa</taxon>
        <taxon>Arthropoda</taxon>
        <taxon>Hexapoda</taxon>
        <taxon>Insecta</taxon>
        <taxon>Pterygota</taxon>
        <taxon>Neoptera</taxon>
        <taxon>Polyneoptera</taxon>
        <taxon>Dictyoptera</taxon>
        <taxon>Blattodea</taxon>
        <taxon>Blattoidea</taxon>
        <taxon>Cryptocercidae</taxon>
        <taxon>Cryptocercus</taxon>
    </lineage>
</organism>
<dbReference type="GO" id="GO:0005576">
    <property type="term" value="C:extracellular region"/>
    <property type="evidence" value="ECO:0007669"/>
    <property type="project" value="UniProtKB-SubCell"/>
</dbReference>
<dbReference type="GO" id="GO:0005184">
    <property type="term" value="F:neuropeptide hormone activity"/>
    <property type="evidence" value="ECO:0007669"/>
    <property type="project" value="InterPro"/>
</dbReference>
<dbReference type="GO" id="GO:0007218">
    <property type="term" value="P:neuropeptide signaling pathway"/>
    <property type="evidence" value="ECO:0007669"/>
    <property type="project" value="UniProtKB-KW"/>
</dbReference>
<dbReference type="InterPro" id="IPR001484">
    <property type="entry name" value="Pyrokinin_CS"/>
</dbReference>
<dbReference type="PROSITE" id="PS00539">
    <property type="entry name" value="PYROKININ"/>
    <property type="match status" value="1"/>
</dbReference>
<evidence type="ECO:0000250" key="1">
    <source>
        <dbReference type="UniProtKB" id="P82617"/>
    </source>
</evidence>
<evidence type="ECO:0000255" key="2"/>
<evidence type="ECO:0000269" key="3">
    <source>
    </source>
</evidence>
<evidence type="ECO:0000303" key="4">
    <source>
    </source>
</evidence>
<evidence type="ECO:0000305" key="5"/>
<feature type="peptide" id="PRO_0000378684" description="Pyrokinin-5" evidence="3">
    <location>
        <begin position="1"/>
        <end position="17"/>
    </location>
</feature>
<feature type="modified residue" description="Leucine amide" evidence="3">
    <location>
        <position position="17"/>
    </location>
</feature>
<protein>
    <recommendedName>
        <fullName evidence="1">Pyrokinin-5</fullName>
    </recommendedName>
    <alternativeName>
        <fullName evidence="4">CryKy-Capa-PK</fullName>
    </alternativeName>
    <alternativeName>
        <fullName evidence="1">FXPRL-amide</fullName>
    </alternativeName>
</protein>